<protein>
    <recommendedName>
        <fullName>Delta-conotoxin-like TxMKLT1-0111</fullName>
    </recommendedName>
</protein>
<accession>Q9U656</accession>
<feature type="signal peptide" evidence="2">
    <location>
        <begin position="1"/>
        <end position="22"/>
    </location>
</feature>
<feature type="propeptide" id="PRO_0000404732" evidence="1">
    <location>
        <begin position="23"/>
        <end position="49"/>
    </location>
</feature>
<feature type="peptide" id="PRO_0000404733" description="Delta-conotoxin-like TxMKLT1-0111">
    <location>
        <begin position="52"/>
        <end position="78"/>
    </location>
</feature>
<feature type="disulfide bond" evidence="1">
    <location>
        <begin position="53"/>
        <end position="68"/>
    </location>
</feature>
<feature type="disulfide bond" evidence="1">
    <location>
        <begin position="60"/>
        <end position="72"/>
    </location>
</feature>
<feature type="disulfide bond" evidence="1">
    <location>
        <begin position="67"/>
        <end position="77"/>
    </location>
</feature>
<name>O1613_CONTE</name>
<organism>
    <name type="scientific">Conus textile</name>
    <name type="common">Cloth-of-gold cone</name>
    <dbReference type="NCBI Taxonomy" id="6494"/>
    <lineage>
        <taxon>Eukaryota</taxon>
        <taxon>Metazoa</taxon>
        <taxon>Spiralia</taxon>
        <taxon>Lophotrochozoa</taxon>
        <taxon>Mollusca</taxon>
        <taxon>Gastropoda</taxon>
        <taxon>Caenogastropoda</taxon>
        <taxon>Neogastropoda</taxon>
        <taxon>Conoidea</taxon>
        <taxon>Conidae</taxon>
        <taxon>Conus</taxon>
        <taxon>Cylinder</taxon>
    </lineage>
</organism>
<reference key="1">
    <citation type="journal article" date="2001" name="Mol. Biol. Evol.">
        <title>Mechanisms for evolving hypervariability: the case of conopeptides.</title>
        <authorList>
            <person name="Conticello S.G."/>
            <person name="Gilad Y."/>
            <person name="Avidan N."/>
            <person name="Ben-Asher E."/>
            <person name="Levy Z."/>
            <person name="Fainzilber M."/>
        </authorList>
    </citation>
    <scope>NUCLEOTIDE SEQUENCE [MRNA]</scope>
    <source>
        <tissue>Venom duct</tissue>
    </source>
</reference>
<keyword id="KW-0165">Cleavage on pair of basic residues</keyword>
<keyword id="KW-1015">Disulfide bond</keyword>
<keyword id="KW-0872">Ion channel impairing toxin</keyword>
<keyword id="KW-0960">Knottin</keyword>
<keyword id="KW-0528">Neurotoxin</keyword>
<keyword id="KW-0964">Secreted</keyword>
<keyword id="KW-0732">Signal</keyword>
<keyword id="KW-0800">Toxin</keyword>
<keyword id="KW-0738">Voltage-gated sodium channel impairing toxin</keyword>
<sequence>MKLTCMMIVAVLFLTAWTFATADDSGNGLENLFSNAHHQMKNPEASKLNKRWCKQSGEMCNLLDQNCCDGYCIVFVCT</sequence>
<proteinExistence type="evidence at transcript level"/>
<comment type="function">
    <text evidence="1">Delta-conotoxins bind to site 6 of voltage-gated sodium channels (Nav) and inhibit the inactivation process.</text>
</comment>
<comment type="subcellular location">
    <subcellularLocation>
        <location evidence="1">Secreted</location>
    </subcellularLocation>
</comment>
<comment type="tissue specificity">
    <text>Expressed by the venom duct.</text>
</comment>
<comment type="domain">
    <text evidence="1">The presence of a 'disulfide through disulfide knot' structurally defines this protein as a knottin.</text>
</comment>
<comment type="domain">
    <text>The cysteine framework is VI/VII (C-C-CC-C-C).</text>
</comment>
<comment type="similarity">
    <text evidence="3">Belongs to the conotoxin O1 superfamily.</text>
</comment>
<dbReference type="EMBL" id="AF193260">
    <property type="protein sequence ID" value="AAF07971.1"/>
    <property type="molecule type" value="mRNA"/>
</dbReference>
<dbReference type="ConoServer" id="1093">
    <property type="toxin name" value="TxMKLT1-0111 precursor"/>
</dbReference>
<dbReference type="GO" id="GO:0005576">
    <property type="term" value="C:extracellular region"/>
    <property type="evidence" value="ECO:0007669"/>
    <property type="project" value="UniProtKB-SubCell"/>
</dbReference>
<dbReference type="GO" id="GO:0019871">
    <property type="term" value="F:sodium channel inhibitor activity"/>
    <property type="evidence" value="ECO:0007669"/>
    <property type="project" value="InterPro"/>
</dbReference>
<dbReference type="GO" id="GO:0090729">
    <property type="term" value="F:toxin activity"/>
    <property type="evidence" value="ECO:0007669"/>
    <property type="project" value="UniProtKB-KW"/>
</dbReference>
<dbReference type="InterPro" id="IPR004214">
    <property type="entry name" value="Conotoxin"/>
</dbReference>
<dbReference type="InterPro" id="IPR012322">
    <property type="entry name" value="Conotoxin_d-typ_CS"/>
</dbReference>
<dbReference type="Pfam" id="PF02950">
    <property type="entry name" value="Conotoxin"/>
    <property type="match status" value="1"/>
</dbReference>
<dbReference type="SUPFAM" id="SSF57059">
    <property type="entry name" value="omega toxin-like"/>
    <property type="match status" value="1"/>
</dbReference>
<dbReference type="PROSITE" id="PS60005">
    <property type="entry name" value="DELTA_CONOTOXIN"/>
    <property type="match status" value="1"/>
</dbReference>
<evidence type="ECO:0000250" key="1"/>
<evidence type="ECO:0000255" key="2"/>
<evidence type="ECO:0000305" key="3"/>